<dbReference type="EMBL" id="M80525">
    <property type="protein sequence ID" value="AAA27554.1"/>
    <property type="molecule type" value="Genomic_DNA"/>
</dbReference>
<dbReference type="PIR" id="JQ1461">
    <property type="entry name" value="JQ1461"/>
</dbReference>
<dbReference type="SMR" id="P26348"/>
<dbReference type="STRING" id="55601.AA407_10720"/>
<dbReference type="GO" id="GO:0005829">
    <property type="term" value="C:cytosol"/>
    <property type="evidence" value="ECO:0007669"/>
    <property type="project" value="TreeGrafter"/>
</dbReference>
<dbReference type="GO" id="GO:0005524">
    <property type="term" value="F:ATP binding"/>
    <property type="evidence" value="ECO:0007669"/>
    <property type="project" value="UniProtKB-UniRule"/>
</dbReference>
<dbReference type="GO" id="GO:0016887">
    <property type="term" value="F:ATP hydrolysis activity"/>
    <property type="evidence" value="ECO:0007669"/>
    <property type="project" value="InterPro"/>
</dbReference>
<dbReference type="GO" id="GO:0140664">
    <property type="term" value="F:ATP-dependent DNA damage sensor activity"/>
    <property type="evidence" value="ECO:0007669"/>
    <property type="project" value="InterPro"/>
</dbReference>
<dbReference type="GO" id="GO:0003684">
    <property type="term" value="F:damaged DNA binding"/>
    <property type="evidence" value="ECO:0007669"/>
    <property type="project" value="UniProtKB-UniRule"/>
</dbReference>
<dbReference type="GO" id="GO:0003697">
    <property type="term" value="F:single-stranded DNA binding"/>
    <property type="evidence" value="ECO:0007669"/>
    <property type="project" value="UniProtKB-UniRule"/>
</dbReference>
<dbReference type="GO" id="GO:0006310">
    <property type="term" value="P:DNA recombination"/>
    <property type="evidence" value="ECO:0007669"/>
    <property type="project" value="UniProtKB-UniRule"/>
</dbReference>
<dbReference type="GO" id="GO:0006281">
    <property type="term" value="P:DNA repair"/>
    <property type="evidence" value="ECO:0007669"/>
    <property type="project" value="UniProtKB-UniRule"/>
</dbReference>
<dbReference type="GO" id="GO:0009432">
    <property type="term" value="P:SOS response"/>
    <property type="evidence" value="ECO:0007669"/>
    <property type="project" value="UniProtKB-UniRule"/>
</dbReference>
<dbReference type="CDD" id="cd00983">
    <property type="entry name" value="RecA"/>
    <property type="match status" value="1"/>
</dbReference>
<dbReference type="FunFam" id="3.40.50.300:FF:000087">
    <property type="entry name" value="Recombinase RecA"/>
    <property type="match status" value="1"/>
</dbReference>
<dbReference type="Gene3D" id="3.40.50.300">
    <property type="entry name" value="P-loop containing nucleotide triphosphate hydrolases"/>
    <property type="match status" value="1"/>
</dbReference>
<dbReference type="HAMAP" id="MF_00268">
    <property type="entry name" value="RecA"/>
    <property type="match status" value="1"/>
</dbReference>
<dbReference type="InterPro" id="IPR003593">
    <property type="entry name" value="AAA+_ATPase"/>
</dbReference>
<dbReference type="InterPro" id="IPR013765">
    <property type="entry name" value="DNA_recomb/repair_RecA"/>
</dbReference>
<dbReference type="InterPro" id="IPR020584">
    <property type="entry name" value="DNA_recomb/repair_RecA_CS"/>
</dbReference>
<dbReference type="InterPro" id="IPR027417">
    <property type="entry name" value="P-loop_NTPase"/>
</dbReference>
<dbReference type="InterPro" id="IPR049261">
    <property type="entry name" value="RecA-like_C"/>
</dbReference>
<dbReference type="InterPro" id="IPR049428">
    <property type="entry name" value="RecA-like_N"/>
</dbReference>
<dbReference type="InterPro" id="IPR020588">
    <property type="entry name" value="RecA_ATP-bd"/>
</dbReference>
<dbReference type="InterPro" id="IPR023400">
    <property type="entry name" value="RecA_C_sf"/>
</dbReference>
<dbReference type="InterPro" id="IPR020587">
    <property type="entry name" value="RecA_monomer-monomer_interface"/>
</dbReference>
<dbReference type="NCBIfam" id="TIGR02012">
    <property type="entry name" value="tigrfam_recA"/>
    <property type="match status" value="1"/>
</dbReference>
<dbReference type="PANTHER" id="PTHR45900:SF1">
    <property type="entry name" value="MITOCHONDRIAL DNA REPAIR PROTEIN RECA HOMOLOG-RELATED"/>
    <property type="match status" value="1"/>
</dbReference>
<dbReference type="PANTHER" id="PTHR45900">
    <property type="entry name" value="RECA"/>
    <property type="match status" value="1"/>
</dbReference>
<dbReference type="Pfam" id="PF00154">
    <property type="entry name" value="RecA"/>
    <property type="match status" value="1"/>
</dbReference>
<dbReference type="Pfam" id="PF21096">
    <property type="entry name" value="RecA_C"/>
    <property type="match status" value="1"/>
</dbReference>
<dbReference type="PRINTS" id="PR00142">
    <property type="entry name" value="RECA"/>
</dbReference>
<dbReference type="SMART" id="SM00382">
    <property type="entry name" value="AAA"/>
    <property type="match status" value="1"/>
</dbReference>
<dbReference type="SUPFAM" id="SSF52540">
    <property type="entry name" value="P-loop containing nucleoside triphosphate hydrolases"/>
    <property type="match status" value="1"/>
</dbReference>
<dbReference type="SUPFAM" id="SSF54752">
    <property type="entry name" value="RecA protein, C-terminal domain"/>
    <property type="match status" value="1"/>
</dbReference>
<dbReference type="PROSITE" id="PS00321">
    <property type="entry name" value="RECA_1"/>
    <property type="match status" value="1"/>
</dbReference>
<dbReference type="PROSITE" id="PS50162">
    <property type="entry name" value="RECA_2"/>
    <property type="match status" value="1"/>
</dbReference>
<dbReference type="PROSITE" id="PS50163">
    <property type="entry name" value="RECA_3"/>
    <property type="match status" value="1"/>
</dbReference>
<evidence type="ECO:0000255" key="1">
    <source>
        <dbReference type="HAMAP-Rule" id="MF_00268"/>
    </source>
</evidence>
<gene>
    <name evidence="1" type="primary">recA</name>
</gene>
<organism>
    <name type="scientific">Vibrio anguillarum</name>
    <name type="common">Listonella anguillarum</name>
    <dbReference type="NCBI Taxonomy" id="55601"/>
    <lineage>
        <taxon>Bacteria</taxon>
        <taxon>Pseudomonadati</taxon>
        <taxon>Pseudomonadota</taxon>
        <taxon>Gammaproteobacteria</taxon>
        <taxon>Vibrionales</taxon>
        <taxon>Vibrionaceae</taxon>
        <taxon>Vibrio</taxon>
    </lineage>
</organism>
<feature type="chain" id="PRO_0000122890" description="Protein RecA">
    <location>
        <begin position="1"/>
        <end position="348"/>
    </location>
</feature>
<feature type="binding site" evidence="1">
    <location>
        <begin position="65"/>
        <end position="72"/>
    </location>
    <ligand>
        <name>ATP</name>
        <dbReference type="ChEBI" id="CHEBI:30616"/>
    </ligand>
</feature>
<accession>P26348</accession>
<proteinExistence type="inferred from homology"/>
<protein>
    <recommendedName>
        <fullName evidence="1">Protein RecA</fullName>
    </recommendedName>
    <alternativeName>
        <fullName evidence="1">Recombinase A</fullName>
    </alternativeName>
</protein>
<reference key="1">
    <citation type="journal article" date="1991" name="Mol. Microbiol.">
        <title>Co-operative autoregulation of a replication protein gene.</title>
        <authorList>
            <person name="Gammie A.E."/>
            <person name="Crosa J.H."/>
        </authorList>
    </citation>
    <scope>NUCLEOTIDE SEQUENCE [GENOMIC DNA]</scope>
</reference>
<reference key="2">
    <citation type="journal article" date="1992" name="Gene">
        <title>Characterization of the recA gene of Vibrio anguillarum.</title>
        <authorList>
            <person name="Tolmasky M.E."/>
            <person name="Gammie A.E."/>
            <person name="Crosa J.H."/>
        </authorList>
    </citation>
    <scope>NUCLEOTIDE SEQUENCE [GENOMIC DNA]</scope>
    <source>
        <strain>531A</strain>
    </source>
</reference>
<keyword id="KW-0067">ATP-binding</keyword>
<keyword id="KW-0963">Cytoplasm</keyword>
<keyword id="KW-0227">DNA damage</keyword>
<keyword id="KW-0233">DNA recombination</keyword>
<keyword id="KW-0234">DNA repair</keyword>
<keyword id="KW-0238">DNA-binding</keyword>
<keyword id="KW-0547">Nucleotide-binding</keyword>
<keyword id="KW-0742">SOS response</keyword>
<sequence length="348" mass="37558">MDENKQKALAAALGQIEKQFGKGSIMRLGDNRTMDVETISTGSLSLDIALGAGGLPMGRIVEVYGPESSGKTTLTLELIAAAQRVGKTCAFIDAEHALDPIYAKKLGVNIDELLVSQPDTGEQALEICDALARSGAIDVIVIDSVAALTPKAEIEGEMGDSHMGLQARMLSQAMRKLTGNLKQSNCMCIFINQIRMKIGVMFGNPETTTGGNALKFYASVRLDIRRTGSIKEGDEAVGNETRIKVVKNKIAAPFKQADTQILYGQGFNREGELVDLGVKHKLVEKAGAWYSYNGDKIGQGKANACKFLRENPAAAMALDTKLREMLLNPAELIVEEPILSEMPQEEEL</sequence>
<name>RECA_VIBAN</name>
<comment type="function">
    <text>Can catalyze the hydrolysis of ATP in the presence of single-stranded DNA, the ATP-dependent uptake of single-stranded DNA by duplex DNA, and the ATP-dependent hybridization of homologous single-stranded DNAs. It interacts with LexA causing its activation and leading to its autocatalytic cleavage.</text>
</comment>
<comment type="subcellular location">
    <subcellularLocation>
        <location evidence="1">Cytoplasm</location>
    </subcellularLocation>
</comment>
<comment type="similarity">
    <text evidence="1">Belongs to the RecA family.</text>
</comment>